<protein>
    <recommendedName>
        <fullName evidence="1">6,7-dimethyl-8-ribityllumazine synthase</fullName>
        <shortName evidence="1">DMRL synthase</shortName>
        <shortName evidence="1">LS</shortName>
        <shortName evidence="1">Lumazine synthase</shortName>
        <ecNumber evidence="1">2.5.1.78</ecNumber>
    </recommendedName>
</protein>
<dbReference type="EC" id="2.5.1.78" evidence="1"/>
<dbReference type="EMBL" id="CP001072">
    <property type="protein sequence ID" value="ACD47471.1"/>
    <property type="molecule type" value="Genomic_DNA"/>
</dbReference>
<dbReference type="RefSeq" id="WP_001165591.1">
    <property type="nucleotide sequence ID" value="NC_010698.2"/>
</dbReference>
<dbReference type="SMR" id="B2UW06"/>
<dbReference type="KEGG" id="hps:HPSH_00010"/>
<dbReference type="HOGENOM" id="CLU_089358_1_1_7"/>
<dbReference type="UniPathway" id="UPA00275">
    <property type="reaction ID" value="UER00404"/>
</dbReference>
<dbReference type="GO" id="GO:0005829">
    <property type="term" value="C:cytosol"/>
    <property type="evidence" value="ECO:0007669"/>
    <property type="project" value="TreeGrafter"/>
</dbReference>
<dbReference type="GO" id="GO:0009349">
    <property type="term" value="C:riboflavin synthase complex"/>
    <property type="evidence" value="ECO:0007669"/>
    <property type="project" value="InterPro"/>
</dbReference>
<dbReference type="GO" id="GO:0000906">
    <property type="term" value="F:6,7-dimethyl-8-ribityllumazine synthase activity"/>
    <property type="evidence" value="ECO:0007669"/>
    <property type="project" value="UniProtKB-UniRule"/>
</dbReference>
<dbReference type="GO" id="GO:0009231">
    <property type="term" value="P:riboflavin biosynthetic process"/>
    <property type="evidence" value="ECO:0007669"/>
    <property type="project" value="UniProtKB-UniRule"/>
</dbReference>
<dbReference type="CDD" id="cd09209">
    <property type="entry name" value="Lumazine_synthase-I"/>
    <property type="match status" value="1"/>
</dbReference>
<dbReference type="FunFam" id="3.40.50.960:FF:000001">
    <property type="entry name" value="6,7-dimethyl-8-ribityllumazine synthase"/>
    <property type="match status" value="1"/>
</dbReference>
<dbReference type="Gene3D" id="3.40.50.960">
    <property type="entry name" value="Lumazine/riboflavin synthase"/>
    <property type="match status" value="1"/>
</dbReference>
<dbReference type="HAMAP" id="MF_00178">
    <property type="entry name" value="Lumazine_synth"/>
    <property type="match status" value="1"/>
</dbReference>
<dbReference type="InterPro" id="IPR034964">
    <property type="entry name" value="LS"/>
</dbReference>
<dbReference type="InterPro" id="IPR002180">
    <property type="entry name" value="LS/RS"/>
</dbReference>
<dbReference type="InterPro" id="IPR036467">
    <property type="entry name" value="LS/RS_sf"/>
</dbReference>
<dbReference type="NCBIfam" id="TIGR00114">
    <property type="entry name" value="lumazine-synth"/>
    <property type="match status" value="1"/>
</dbReference>
<dbReference type="PANTHER" id="PTHR21058:SF0">
    <property type="entry name" value="6,7-DIMETHYL-8-RIBITYLLUMAZINE SYNTHASE"/>
    <property type="match status" value="1"/>
</dbReference>
<dbReference type="PANTHER" id="PTHR21058">
    <property type="entry name" value="6,7-DIMETHYL-8-RIBITYLLUMAZINE SYNTHASE DMRL SYNTHASE LUMAZINE SYNTHASE"/>
    <property type="match status" value="1"/>
</dbReference>
<dbReference type="Pfam" id="PF00885">
    <property type="entry name" value="DMRL_synthase"/>
    <property type="match status" value="1"/>
</dbReference>
<dbReference type="SUPFAM" id="SSF52121">
    <property type="entry name" value="Lumazine synthase"/>
    <property type="match status" value="1"/>
</dbReference>
<comment type="function">
    <text evidence="1">Catalyzes the formation of 6,7-dimethyl-8-ribityllumazine by condensation of 5-amino-6-(D-ribitylamino)uracil with 3,4-dihydroxy-2-butanone 4-phosphate. This is the penultimate step in the biosynthesis of riboflavin.</text>
</comment>
<comment type="catalytic activity">
    <reaction evidence="1">
        <text>(2S)-2-hydroxy-3-oxobutyl phosphate + 5-amino-6-(D-ribitylamino)uracil = 6,7-dimethyl-8-(1-D-ribityl)lumazine + phosphate + 2 H2O + H(+)</text>
        <dbReference type="Rhea" id="RHEA:26152"/>
        <dbReference type="ChEBI" id="CHEBI:15377"/>
        <dbReference type="ChEBI" id="CHEBI:15378"/>
        <dbReference type="ChEBI" id="CHEBI:15934"/>
        <dbReference type="ChEBI" id="CHEBI:43474"/>
        <dbReference type="ChEBI" id="CHEBI:58201"/>
        <dbReference type="ChEBI" id="CHEBI:58830"/>
        <dbReference type="EC" id="2.5.1.78"/>
    </reaction>
</comment>
<comment type="pathway">
    <text evidence="1">Cofactor biosynthesis; riboflavin biosynthesis; riboflavin from 2-hydroxy-3-oxobutyl phosphate and 5-amino-6-(D-ribitylamino)uracil: step 1/2.</text>
</comment>
<comment type="similarity">
    <text evidence="1">Belongs to the DMRL synthase family.</text>
</comment>
<feature type="chain" id="PRO_1000098198" description="6,7-dimethyl-8-ribityllumazine synthase">
    <location>
        <begin position="1"/>
        <end position="156"/>
    </location>
</feature>
<feature type="active site" description="Proton donor" evidence="1">
    <location>
        <position position="89"/>
    </location>
</feature>
<feature type="binding site" evidence="1">
    <location>
        <position position="23"/>
    </location>
    <ligand>
        <name>5-amino-6-(D-ribitylamino)uracil</name>
        <dbReference type="ChEBI" id="CHEBI:15934"/>
    </ligand>
</feature>
<feature type="binding site" evidence="1">
    <location>
        <begin position="57"/>
        <end position="59"/>
    </location>
    <ligand>
        <name>5-amino-6-(D-ribitylamino)uracil</name>
        <dbReference type="ChEBI" id="CHEBI:15934"/>
    </ligand>
</feature>
<feature type="binding site" evidence="1">
    <location>
        <begin position="81"/>
        <end position="83"/>
    </location>
    <ligand>
        <name>5-amino-6-(D-ribitylamino)uracil</name>
        <dbReference type="ChEBI" id="CHEBI:15934"/>
    </ligand>
</feature>
<feature type="binding site" evidence="1">
    <location>
        <begin position="86"/>
        <end position="87"/>
    </location>
    <ligand>
        <name>(2S)-2-hydroxy-3-oxobutyl phosphate</name>
        <dbReference type="ChEBI" id="CHEBI:58830"/>
    </ligand>
</feature>
<feature type="binding site" evidence="1">
    <location>
        <position position="114"/>
    </location>
    <ligand>
        <name>5-amino-6-(D-ribitylamino)uracil</name>
        <dbReference type="ChEBI" id="CHEBI:15934"/>
    </ligand>
</feature>
<feature type="binding site" evidence="1">
    <location>
        <position position="128"/>
    </location>
    <ligand>
        <name>(2S)-2-hydroxy-3-oxobutyl phosphate</name>
        <dbReference type="ChEBI" id="CHEBI:58830"/>
    </ligand>
</feature>
<keyword id="KW-0686">Riboflavin biosynthesis</keyword>
<keyword id="KW-0808">Transferase</keyword>
<sequence length="156" mass="16938">MQIIEGKLHLQGNEKVAILTSRFNHIITDRLQEGAIDCFKRHGGDENLLDIVLVPGAYELPFILERLLGSEKYDGVCVLGAIIRGGTPHFDYVSAEATKGIANAMLKYSMPVSFGVLTTDNVEQAIERAGSKAGNKGFEAMSTLIELLSLCQTLKG</sequence>
<organism>
    <name type="scientific">Helicobacter pylori (strain Shi470)</name>
    <dbReference type="NCBI Taxonomy" id="512562"/>
    <lineage>
        <taxon>Bacteria</taxon>
        <taxon>Pseudomonadati</taxon>
        <taxon>Campylobacterota</taxon>
        <taxon>Epsilonproteobacteria</taxon>
        <taxon>Campylobacterales</taxon>
        <taxon>Helicobacteraceae</taxon>
        <taxon>Helicobacter</taxon>
    </lineage>
</organism>
<gene>
    <name evidence="1" type="primary">ribH</name>
    <name type="ordered locus">HPSH_00010</name>
</gene>
<proteinExistence type="inferred from homology"/>
<reference key="1">
    <citation type="submission" date="2008-05" db="EMBL/GenBank/DDBJ databases">
        <title>Genome sequence of Helicobacter pylori from the remote Amazon: traces of Asian ancestry of the first Americans.</title>
        <authorList>
            <person name="Kersulyte D."/>
            <person name="Kalia A."/>
            <person name="Gilman R.H."/>
            <person name="Berg D.E."/>
        </authorList>
    </citation>
    <scope>NUCLEOTIDE SEQUENCE [LARGE SCALE GENOMIC DNA]</scope>
    <source>
        <strain>Shi470</strain>
    </source>
</reference>
<evidence type="ECO:0000255" key="1">
    <source>
        <dbReference type="HAMAP-Rule" id="MF_00178"/>
    </source>
</evidence>
<accession>B2UW06</accession>
<name>RISB_HELPS</name>